<reference key="1">
    <citation type="journal article" date="2005" name="Nature">
        <title>The genome of the social amoeba Dictyostelium discoideum.</title>
        <authorList>
            <person name="Eichinger L."/>
            <person name="Pachebat J.A."/>
            <person name="Gloeckner G."/>
            <person name="Rajandream M.A."/>
            <person name="Sucgang R."/>
            <person name="Berriman M."/>
            <person name="Song J."/>
            <person name="Olsen R."/>
            <person name="Szafranski K."/>
            <person name="Xu Q."/>
            <person name="Tunggal B."/>
            <person name="Kummerfeld S."/>
            <person name="Madera M."/>
            <person name="Konfortov B.A."/>
            <person name="Rivero F."/>
            <person name="Bankier A.T."/>
            <person name="Lehmann R."/>
            <person name="Hamlin N."/>
            <person name="Davies R."/>
            <person name="Gaudet P."/>
            <person name="Fey P."/>
            <person name="Pilcher K."/>
            <person name="Chen G."/>
            <person name="Saunders D."/>
            <person name="Sodergren E.J."/>
            <person name="Davis P."/>
            <person name="Kerhornou A."/>
            <person name="Nie X."/>
            <person name="Hall N."/>
            <person name="Anjard C."/>
            <person name="Hemphill L."/>
            <person name="Bason N."/>
            <person name="Farbrother P."/>
            <person name="Desany B."/>
            <person name="Just E."/>
            <person name="Morio T."/>
            <person name="Rost R."/>
            <person name="Churcher C.M."/>
            <person name="Cooper J."/>
            <person name="Haydock S."/>
            <person name="van Driessche N."/>
            <person name="Cronin A."/>
            <person name="Goodhead I."/>
            <person name="Muzny D.M."/>
            <person name="Mourier T."/>
            <person name="Pain A."/>
            <person name="Lu M."/>
            <person name="Harper D."/>
            <person name="Lindsay R."/>
            <person name="Hauser H."/>
            <person name="James K.D."/>
            <person name="Quiles M."/>
            <person name="Madan Babu M."/>
            <person name="Saito T."/>
            <person name="Buchrieser C."/>
            <person name="Wardroper A."/>
            <person name="Felder M."/>
            <person name="Thangavelu M."/>
            <person name="Johnson D."/>
            <person name="Knights A."/>
            <person name="Loulseged H."/>
            <person name="Mungall K.L."/>
            <person name="Oliver K."/>
            <person name="Price C."/>
            <person name="Quail M.A."/>
            <person name="Urushihara H."/>
            <person name="Hernandez J."/>
            <person name="Rabbinowitsch E."/>
            <person name="Steffen D."/>
            <person name="Sanders M."/>
            <person name="Ma J."/>
            <person name="Kohara Y."/>
            <person name="Sharp S."/>
            <person name="Simmonds M.N."/>
            <person name="Spiegler S."/>
            <person name="Tivey A."/>
            <person name="Sugano S."/>
            <person name="White B."/>
            <person name="Walker D."/>
            <person name="Woodward J.R."/>
            <person name="Winckler T."/>
            <person name="Tanaka Y."/>
            <person name="Shaulsky G."/>
            <person name="Schleicher M."/>
            <person name="Weinstock G.M."/>
            <person name="Rosenthal A."/>
            <person name="Cox E.C."/>
            <person name="Chisholm R.L."/>
            <person name="Gibbs R.A."/>
            <person name="Loomis W.F."/>
            <person name="Platzer M."/>
            <person name="Kay R.R."/>
            <person name="Williams J.G."/>
            <person name="Dear P.H."/>
            <person name="Noegel A.A."/>
            <person name="Barrell B.G."/>
            <person name="Kuspa A."/>
        </authorList>
    </citation>
    <scope>NUCLEOTIDE SEQUENCE [LARGE SCALE GENOMIC DNA]</scope>
    <source>
        <strain>AX4</strain>
    </source>
</reference>
<protein>
    <recommendedName>
        <fullName>Protein transport protein SEC31</fullName>
    </recommendedName>
</protein>
<gene>
    <name type="primary">sec31</name>
    <name type="ORF">DDB_G0270992</name>
</gene>
<accession>Q55CT5</accession>
<organism>
    <name type="scientific">Dictyostelium discoideum</name>
    <name type="common">Social amoeba</name>
    <dbReference type="NCBI Taxonomy" id="44689"/>
    <lineage>
        <taxon>Eukaryota</taxon>
        <taxon>Amoebozoa</taxon>
        <taxon>Evosea</taxon>
        <taxon>Eumycetozoa</taxon>
        <taxon>Dictyostelia</taxon>
        <taxon>Dictyosteliales</taxon>
        <taxon>Dictyosteliaceae</taxon>
        <taxon>Dictyostelium</taxon>
    </lineage>
</organism>
<dbReference type="EMBL" id="AAFI02000005">
    <property type="protein sequence ID" value="EAL72846.1"/>
    <property type="molecule type" value="Genomic_DNA"/>
</dbReference>
<dbReference type="RefSeq" id="XP_646396.1">
    <property type="nucleotide sequence ID" value="XM_641304.1"/>
</dbReference>
<dbReference type="SMR" id="Q55CT5"/>
<dbReference type="FunCoup" id="Q55CT5">
    <property type="interactions" value="669"/>
</dbReference>
<dbReference type="STRING" id="44689.Q55CT5"/>
<dbReference type="GlyGen" id="Q55CT5">
    <property type="glycosylation" value="1 site"/>
</dbReference>
<dbReference type="PaxDb" id="44689-DDB0235185"/>
<dbReference type="EnsemblProtists" id="EAL72846">
    <property type="protein sequence ID" value="EAL72846"/>
    <property type="gene ID" value="DDB_G0270992"/>
</dbReference>
<dbReference type="GeneID" id="8617351"/>
<dbReference type="KEGG" id="ddi:DDB_G0270992"/>
<dbReference type="dictyBase" id="DDB_G0270992">
    <property type="gene designation" value="sec31"/>
</dbReference>
<dbReference type="VEuPathDB" id="AmoebaDB:DDB_G0270992"/>
<dbReference type="eggNOG" id="KOG0307">
    <property type="taxonomic scope" value="Eukaryota"/>
</dbReference>
<dbReference type="HOGENOM" id="CLU_254825_0_0_1"/>
<dbReference type="InParanoid" id="Q55CT5"/>
<dbReference type="OMA" id="WLERPCG"/>
<dbReference type="PhylomeDB" id="Q55CT5"/>
<dbReference type="Reactome" id="R-DDI-204005">
    <property type="pathway name" value="COPII-mediated vesicle transport"/>
</dbReference>
<dbReference type="PRO" id="PR:Q55CT5"/>
<dbReference type="Proteomes" id="UP000002195">
    <property type="component" value="Chromosome 1"/>
</dbReference>
<dbReference type="GO" id="GO:0030127">
    <property type="term" value="C:COPII vesicle coat"/>
    <property type="evidence" value="ECO:0000318"/>
    <property type="project" value="GO_Central"/>
</dbReference>
<dbReference type="GO" id="GO:0070971">
    <property type="term" value="C:endoplasmic reticulum exit site"/>
    <property type="evidence" value="ECO:0000318"/>
    <property type="project" value="GO_Central"/>
</dbReference>
<dbReference type="GO" id="GO:0005789">
    <property type="term" value="C:endoplasmic reticulum membrane"/>
    <property type="evidence" value="ECO:0007669"/>
    <property type="project" value="UniProtKB-SubCell"/>
</dbReference>
<dbReference type="GO" id="GO:0005198">
    <property type="term" value="F:structural molecule activity"/>
    <property type="evidence" value="ECO:0000318"/>
    <property type="project" value="GO_Central"/>
</dbReference>
<dbReference type="GO" id="GO:0090110">
    <property type="term" value="P:COPII-coated vesicle cargo loading"/>
    <property type="evidence" value="ECO:0000318"/>
    <property type="project" value="GO_Central"/>
</dbReference>
<dbReference type="GO" id="GO:0007029">
    <property type="term" value="P:endoplasmic reticulum organization"/>
    <property type="evidence" value="ECO:0000318"/>
    <property type="project" value="GO_Central"/>
</dbReference>
<dbReference type="GO" id="GO:0006888">
    <property type="term" value="P:endoplasmic reticulum to Golgi vesicle-mediated transport"/>
    <property type="evidence" value="ECO:0000250"/>
    <property type="project" value="dictyBase"/>
</dbReference>
<dbReference type="GO" id="GO:0006886">
    <property type="term" value="P:intracellular protein transport"/>
    <property type="evidence" value="ECO:0000250"/>
    <property type="project" value="dictyBase"/>
</dbReference>
<dbReference type="FunFam" id="1.25.40.1030:FF:000030">
    <property type="entry name" value="Protein transport protein SEC31"/>
    <property type="match status" value="1"/>
</dbReference>
<dbReference type="FunFam" id="2.130.10.10:FF:000526">
    <property type="entry name" value="Protein transport protein SEC31"/>
    <property type="match status" value="1"/>
</dbReference>
<dbReference type="Gene3D" id="1.25.40.1030">
    <property type="match status" value="1"/>
</dbReference>
<dbReference type="Gene3D" id="1.20.940.10">
    <property type="entry name" value="Functional domain of the splicing factor Prp18"/>
    <property type="match status" value="1"/>
</dbReference>
<dbReference type="Gene3D" id="2.130.10.10">
    <property type="entry name" value="YVTN repeat-like/Quinoprotein amine dehydrogenase"/>
    <property type="match status" value="1"/>
</dbReference>
<dbReference type="InterPro" id="IPR024298">
    <property type="entry name" value="Sec16_Sec23-bd"/>
</dbReference>
<dbReference type="InterPro" id="IPR040251">
    <property type="entry name" value="SEC31-like"/>
</dbReference>
<dbReference type="InterPro" id="IPR015943">
    <property type="entry name" value="WD40/YVTN_repeat-like_dom_sf"/>
</dbReference>
<dbReference type="InterPro" id="IPR019775">
    <property type="entry name" value="WD40_repeat_CS"/>
</dbReference>
<dbReference type="InterPro" id="IPR036322">
    <property type="entry name" value="WD40_repeat_dom_sf"/>
</dbReference>
<dbReference type="InterPro" id="IPR001680">
    <property type="entry name" value="WD40_rpt"/>
</dbReference>
<dbReference type="PANTHER" id="PTHR13923">
    <property type="entry name" value="SEC31-RELATED PROTEIN"/>
    <property type="match status" value="1"/>
</dbReference>
<dbReference type="PANTHER" id="PTHR13923:SF11">
    <property type="entry name" value="SECRETORY 31, ISOFORM D"/>
    <property type="match status" value="1"/>
</dbReference>
<dbReference type="Pfam" id="PF12931">
    <property type="entry name" value="TPR_Sec16"/>
    <property type="match status" value="1"/>
</dbReference>
<dbReference type="Pfam" id="PF00400">
    <property type="entry name" value="WD40"/>
    <property type="match status" value="3"/>
</dbReference>
<dbReference type="SMART" id="SM00320">
    <property type="entry name" value="WD40"/>
    <property type="match status" value="5"/>
</dbReference>
<dbReference type="SUPFAM" id="SSF50978">
    <property type="entry name" value="WD40 repeat-like"/>
    <property type="match status" value="1"/>
</dbReference>
<dbReference type="PROSITE" id="PS00678">
    <property type="entry name" value="WD_REPEATS_1"/>
    <property type="match status" value="2"/>
</dbReference>
<dbReference type="PROSITE" id="PS50082">
    <property type="entry name" value="WD_REPEATS_2"/>
    <property type="match status" value="3"/>
</dbReference>
<dbReference type="PROSITE" id="PS50294">
    <property type="entry name" value="WD_REPEATS_REGION"/>
    <property type="match status" value="1"/>
</dbReference>
<sequence length="1355" mass="150127">MSKLKEISRQSTTSWSPIAQYPDYMAVGTVTGTIGADFDTSSKLEIYSLDITNESKQMTLKGSTSSSTRFNKVVWGQASSNFQNGIIAGAMDNGTINLWDPTKILASDATDGGGSDDQSSLIGVGQRHSGPVQSIDFNVQNPNLLASGGSDSEVFIWDLSDPTQPSALNPGSKSQQSSDITCVAWNKKVAHILGSASYNGYIVIWDLKSKKTLMTINDRNRKCKYRSIVWHPSEATQIVAASEDDDHPVIQAWDLRNTTSPVKSMEGHKKGVWGLSWCPSDNALLLSTGKDNKTFCWNFDRQEILCEINDNNSRNNINNNSNNSNSDNNNGNTDPNAWNFEVQWSPRVPALLSTSSYVGKVNVYSLQDVNEKSTSGSSAGQLNALGIQEQTSQITPTIKHTPNWLLRPCGAAFGFGGKIAVFGRNKKVTAAANGATSPSSSSSPASSVQQSQLQQQQRVIHISHVTTEVDIVKSSEQLENVIHTGQYEQYCQEKIDQSTSDEEKSIWGFLKVKFAKDDRLKILDYLGYDIETIKKELKQFLGTLPELPIESGFNELPIENVDDQSKPEPTTTTTNETVHLEPVVDENNNVVDADSFFDTAASDANKEQQDDSSSSPSTKSPTTTTTPIEFPGDEKEQMITKALLVGDHNSAVECCLRLGRYSDALILAHAAGQELWKKTQEAYFEIVRSPFGRVVSCIVKRDFQLLVKSADLKDWKASLAILCTYAPPTDFKILSGILGDRLDKEASDLKSAILCYICAGDIDKTVDIWSRVSQQHQQQQRQSLTSSGNSITVLEQESNKDLQNLIEKVSIFRSACNGNSNNNTLNQVLSMKYAKYAEILASQGNLSASLRYLAPITNSQCKQEYGVLFDRVYRATSNHQGIPQPPFPFQLVDVYSSNQPIQQQQQQQQNKAQQVGHQHQHQHQHQNQHQHQHQHQHQHQPPQQQQQQQQQQQMGRQNTFNQPPQPMGQHQHQQQQQQQQPPIMMNQSPMQNNNNNRIPMMNQPPMMNQPPMMNQPPMMNQPPQMMNQPPQMMNQPPPQMMNQPPPQMMNNNQPPIMMRPMQPSGPSPMNPPPTMNNTQPPPMMNTMGGPSSVNNSQPPIIPMNGNPLPMNPMSPMMSDKSNQPPMNPMMNPMNPMNPMMNPIQPTAPPPMNPMIPQGGSPMINHPPPPMNPMINNGPVSTPPMNPMMNQVVPQNISPPQMPTRSPVLENKSSSPSSESFTSPAPKPNVHNKTPSIITGQLGVTTPSEGPSNEDTERFVEKLQRSIQELNGRTDSKVWEDANKRCQGLINKVSKKDISAEAFKALDAILASIVEKDFKKASDTYIQITSTPLWGEVGSQSMVGLKRLIDLGLKSH</sequence>
<keyword id="KW-0968">Cytoplasmic vesicle</keyword>
<keyword id="KW-0256">Endoplasmic reticulum</keyword>
<keyword id="KW-0931">ER-Golgi transport</keyword>
<keyword id="KW-0472">Membrane</keyword>
<keyword id="KW-0653">Protein transport</keyword>
<keyword id="KW-1185">Reference proteome</keyword>
<keyword id="KW-0677">Repeat</keyword>
<keyword id="KW-0813">Transport</keyword>
<keyword id="KW-0853">WD repeat</keyword>
<evidence type="ECO:0000250" key="1"/>
<evidence type="ECO:0000255" key="2">
    <source>
        <dbReference type="PROSITE-ProRule" id="PRU00221"/>
    </source>
</evidence>
<evidence type="ECO:0000256" key="3">
    <source>
        <dbReference type="SAM" id="MobiDB-lite"/>
    </source>
</evidence>
<evidence type="ECO:0000305" key="4"/>
<comment type="function">
    <text evidence="1">Component of the coat protein complex II (COPII) which promotes the formation of transport vesicles from the endoplasmic reticulum (ER). The coat has two main functions, the physical deformation of the endoplasmic reticulum membrane into vesicles and the selection of cargo molecules (By similarity).</text>
</comment>
<comment type="subunit">
    <text evidence="1">The COPII coat is composed of at least 5 proteins: the sec23/24 complex, the sec13/31 complex, and the protein sar1A or sar1B. sec13 and sec31 make a 2:2 tetramer that forms the edge element of the COPII outer coat. The tetramer self-assembles in multiple copies to form the complete polyhedral cage. Interacts (via WD 8) with sec13 (By similarity).</text>
</comment>
<comment type="subcellular location">
    <subcellularLocation>
        <location evidence="1">Cytoplasmic vesicle</location>
        <location evidence="1">COPII-coated vesicle membrane</location>
        <topology evidence="1">Peripheral membrane protein</topology>
        <orientation evidence="1">Cytoplasmic side</orientation>
    </subcellularLocation>
    <subcellularLocation>
        <location evidence="1">Endoplasmic reticulum membrane</location>
        <topology evidence="1">Peripheral membrane protein</topology>
        <orientation evidence="1">Cytoplasmic side</orientation>
    </subcellularLocation>
</comment>
<comment type="similarity">
    <text evidence="4">Belongs to the WD repeat SEC31 family.</text>
</comment>
<name>SEC31_DICDI</name>
<feature type="chain" id="PRO_0000328076" description="Protein transport protein SEC31">
    <location>
        <begin position="1"/>
        <end position="1355"/>
    </location>
</feature>
<feature type="repeat" description="WD 1">
    <location>
        <begin position="5"/>
        <end position="48"/>
    </location>
</feature>
<feature type="repeat" description="WD 2">
    <location>
        <begin position="65"/>
        <end position="109"/>
    </location>
</feature>
<feature type="repeat" description="WD 3">
    <location>
        <begin position="127"/>
        <end position="167"/>
    </location>
</feature>
<feature type="repeat" description="WD 4">
    <location>
        <begin position="175"/>
        <end position="215"/>
    </location>
</feature>
<feature type="repeat" description="WD 5">
    <location>
        <begin position="220"/>
        <end position="263"/>
    </location>
</feature>
<feature type="repeat" description="WD 6">
    <location>
        <begin position="267"/>
        <end position="307"/>
    </location>
</feature>
<feature type="repeat" description="WD 7">
    <location>
        <begin position="334"/>
        <end position="374"/>
    </location>
</feature>
<feature type="repeat" description="WD 8; interaction with sec13" evidence="2">
    <location>
        <begin position="412"/>
        <end position="463"/>
    </location>
</feature>
<feature type="region of interest" description="Disordered" evidence="3">
    <location>
        <begin position="108"/>
        <end position="127"/>
    </location>
</feature>
<feature type="region of interest" description="Disordered" evidence="3">
    <location>
        <begin position="311"/>
        <end position="338"/>
    </location>
</feature>
<feature type="region of interest" description="Disordered" evidence="3">
    <location>
        <begin position="558"/>
        <end position="585"/>
    </location>
</feature>
<feature type="region of interest" description="Disordered" evidence="3">
    <location>
        <begin position="602"/>
        <end position="632"/>
    </location>
</feature>
<feature type="region of interest" description="Disordered" evidence="3">
    <location>
        <begin position="898"/>
        <end position="1035"/>
    </location>
</feature>
<feature type="region of interest" description="Disordered" evidence="3">
    <location>
        <begin position="1190"/>
        <end position="1255"/>
    </location>
</feature>
<feature type="compositionally biased region" description="Low complexity" evidence="3">
    <location>
        <begin position="567"/>
        <end position="577"/>
    </location>
</feature>
<feature type="compositionally biased region" description="Low complexity" evidence="3">
    <location>
        <begin position="612"/>
        <end position="627"/>
    </location>
</feature>
<feature type="compositionally biased region" description="Low complexity" evidence="3">
    <location>
        <begin position="899"/>
        <end position="917"/>
    </location>
</feature>
<feature type="compositionally biased region" description="Basic residues" evidence="3">
    <location>
        <begin position="918"/>
        <end position="938"/>
    </location>
</feature>
<feature type="compositionally biased region" description="Low complexity" evidence="3">
    <location>
        <begin position="939"/>
        <end position="953"/>
    </location>
</feature>
<feature type="compositionally biased region" description="Low complexity" evidence="3">
    <location>
        <begin position="967"/>
        <end position="1034"/>
    </location>
</feature>
<feature type="compositionally biased region" description="Low complexity" evidence="3">
    <location>
        <begin position="1205"/>
        <end position="1223"/>
    </location>
</feature>
<feature type="compositionally biased region" description="Polar residues" evidence="3">
    <location>
        <begin position="1230"/>
        <end position="1252"/>
    </location>
</feature>
<proteinExistence type="inferred from homology"/>